<gene>
    <name type="primary">Cht8</name>
    <name type="synonym">Cht2</name>
    <name type="ordered locus">Os10g0542900</name>
    <name type="ordered locus">LOC_Os10g39680</name>
    <name type="ORF">OsJ_32330</name>
    <name type="ORF">OSJNBb0015I11.14</name>
</gene>
<reference key="1">
    <citation type="journal article" date="2003" name="Biosci. Biotechnol. Biochem.">
        <title>Structure, heterologous expression, and properties of rice (Oryza sativa L.) family 19 chitinases.</title>
        <authorList>
            <person name="Truong N.-H."/>
            <person name="Park S.-M."/>
            <person name="Nishizawa Y."/>
            <person name="Watanabe T."/>
            <person name="Sasaki T."/>
            <person name="Itoh Y."/>
        </authorList>
    </citation>
    <scope>NUCLEOTIDE SEQUENCE [MRNA]</scope>
    <source>
        <strain>cv. Nipponbare</strain>
    </source>
</reference>
<reference key="2">
    <citation type="journal article" date="2003" name="Science">
        <title>In-depth view of structure, activity, and evolution of rice chromosome 10.</title>
        <authorList>
            <person name="Yu Y."/>
            <person name="Rambo T."/>
            <person name="Currie J."/>
            <person name="Saski C."/>
            <person name="Kim H.-R."/>
            <person name="Collura K."/>
            <person name="Thompson S."/>
            <person name="Simmons J."/>
            <person name="Yang T.-J."/>
            <person name="Nah G."/>
            <person name="Patel A.J."/>
            <person name="Thurmond S."/>
            <person name="Henry D."/>
            <person name="Oates R."/>
            <person name="Palmer M."/>
            <person name="Pries G."/>
            <person name="Gibson J."/>
            <person name="Anderson H."/>
            <person name="Paradkar M."/>
            <person name="Crane L."/>
            <person name="Dale J."/>
            <person name="Carver M.B."/>
            <person name="Wood T."/>
            <person name="Frisch D."/>
            <person name="Engler F."/>
            <person name="Soderlund C."/>
            <person name="Palmer L.E."/>
            <person name="Teytelman L."/>
            <person name="Nascimento L."/>
            <person name="De la Bastide M."/>
            <person name="Spiegel L."/>
            <person name="Ware D."/>
            <person name="O'Shaughnessy A."/>
            <person name="Dike S."/>
            <person name="Dedhia N."/>
            <person name="Preston R."/>
            <person name="Huang E."/>
            <person name="Ferraro K."/>
            <person name="Kuit K."/>
            <person name="Miller B."/>
            <person name="Zutavern T."/>
            <person name="Katzenberger F."/>
            <person name="Muller S."/>
            <person name="Balija V."/>
            <person name="Martienssen R.A."/>
            <person name="Stein L."/>
            <person name="Minx P."/>
            <person name="Johnson D."/>
            <person name="Cordum H."/>
            <person name="Mardis E."/>
            <person name="Cheng Z."/>
            <person name="Jiang J."/>
            <person name="Wilson R."/>
            <person name="McCombie W.R."/>
            <person name="Wing R.A."/>
            <person name="Yuan Q."/>
            <person name="Ouyang S."/>
            <person name="Liu J."/>
            <person name="Jones K.M."/>
            <person name="Gansberger K."/>
            <person name="Moffat K."/>
            <person name="Hill J."/>
            <person name="Tsitrin T."/>
            <person name="Overton L."/>
            <person name="Bera J."/>
            <person name="Kim M."/>
            <person name="Jin S."/>
            <person name="Tallon L."/>
            <person name="Ciecko A."/>
            <person name="Pai G."/>
            <person name="Van Aken S."/>
            <person name="Utterback T."/>
            <person name="Reidmuller S."/>
            <person name="Bormann J."/>
            <person name="Feldblyum T."/>
            <person name="Hsiao J."/>
            <person name="Zismann V."/>
            <person name="Blunt S."/>
            <person name="de Vazeille A.R."/>
            <person name="Shaffer T."/>
            <person name="Koo H."/>
            <person name="Suh B."/>
            <person name="Yang Q."/>
            <person name="Haas B."/>
            <person name="Peterson J."/>
            <person name="Pertea M."/>
            <person name="Volfovsky N."/>
            <person name="Wortman J."/>
            <person name="White O."/>
            <person name="Salzberg S.L."/>
            <person name="Fraser C.M."/>
            <person name="Buell C.R."/>
            <person name="Messing J."/>
            <person name="Song R."/>
            <person name="Fuks G."/>
            <person name="Llaca V."/>
            <person name="Kovchak S."/>
            <person name="Young S."/>
            <person name="Bowers J.E."/>
            <person name="Paterson A.H."/>
            <person name="Johns M.A."/>
            <person name="Mao L."/>
            <person name="Pan H."/>
            <person name="Dean R.A."/>
        </authorList>
    </citation>
    <scope>NUCLEOTIDE SEQUENCE [LARGE SCALE GENOMIC DNA]</scope>
    <source>
        <strain>cv. Nipponbare</strain>
    </source>
</reference>
<reference key="3">
    <citation type="journal article" date="2005" name="Nature">
        <title>The map-based sequence of the rice genome.</title>
        <authorList>
            <consortium name="International rice genome sequencing project (IRGSP)"/>
        </authorList>
    </citation>
    <scope>NUCLEOTIDE SEQUENCE [LARGE SCALE GENOMIC DNA]</scope>
    <source>
        <strain>cv. Nipponbare</strain>
    </source>
</reference>
<reference key="4">
    <citation type="journal article" date="2008" name="Nucleic Acids Res.">
        <title>The rice annotation project database (RAP-DB): 2008 update.</title>
        <authorList>
            <consortium name="The rice annotation project (RAP)"/>
        </authorList>
    </citation>
    <scope>GENOME REANNOTATION</scope>
    <source>
        <strain>cv. Nipponbare</strain>
    </source>
</reference>
<reference key="5">
    <citation type="journal article" date="2013" name="Rice">
        <title>Improvement of the Oryza sativa Nipponbare reference genome using next generation sequence and optical map data.</title>
        <authorList>
            <person name="Kawahara Y."/>
            <person name="de la Bastide M."/>
            <person name="Hamilton J.P."/>
            <person name="Kanamori H."/>
            <person name="McCombie W.R."/>
            <person name="Ouyang S."/>
            <person name="Schwartz D.C."/>
            <person name="Tanaka T."/>
            <person name="Wu J."/>
            <person name="Zhou S."/>
            <person name="Childs K.L."/>
            <person name="Davidson R.M."/>
            <person name="Lin H."/>
            <person name="Quesada-Ocampo L."/>
            <person name="Vaillancourt B."/>
            <person name="Sakai H."/>
            <person name="Lee S.S."/>
            <person name="Kim J."/>
            <person name="Numa H."/>
            <person name="Itoh T."/>
            <person name="Buell C.R."/>
            <person name="Matsumoto T."/>
        </authorList>
    </citation>
    <scope>GENOME REANNOTATION</scope>
    <source>
        <strain>cv. Nipponbare</strain>
    </source>
</reference>
<reference key="6">
    <citation type="journal article" date="2005" name="PLoS Biol.">
        <title>The genomes of Oryza sativa: a history of duplications.</title>
        <authorList>
            <person name="Yu J."/>
            <person name="Wang J."/>
            <person name="Lin W."/>
            <person name="Li S."/>
            <person name="Li H."/>
            <person name="Zhou J."/>
            <person name="Ni P."/>
            <person name="Dong W."/>
            <person name="Hu S."/>
            <person name="Zeng C."/>
            <person name="Zhang J."/>
            <person name="Zhang Y."/>
            <person name="Li R."/>
            <person name="Xu Z."/>
            <person name="Li S."/>
            <person name="Li X."/>
            <person name="Zheng H."/>
            <person name="Cong L."/>
            <person name="Lin L."/>
            <person name="Yin J."/>
            <person name="Geng J."/>
            <person name="Li G."/>
            <person name="Shi J."/>
            <person name="Liu J."/>
            <person name="Lv H."/>
            <person name="Li J."/>
            <person name="Wang J."/>
            <person name="Deng Y."/>
            <person name="Ran L."/>
            <person name="Shi X."/>
            <person name="Wang X."/>
            <person name="Wu Q."/>
            <person name="Li C."/>
            <person name="Ren X."/>
            <person name="Wang J."/>
            <person name="Wang X."/>
            <person name="Li D."/>
            <person name="Liu D."/>
            <person name="Zhang X."/>
            <person name="Ji Z."/>
            <person name="Zhao W."/>
            <person name="Sun Y."/>
            <person name="Zhang Z."/>
            <person name="Bao J."/>
            <person name="Han Y."/>
            <person name="Dong L."/>
            <person name="Ji J."/>
            <person name="Chen P."/>
            <person name="Wu S."/>
            <person name="Liu J."/>
            <person name="Xiao Y."/>
            <person name="Bu D."/>
            <person name="Tan J."/>
            <person name="Yang L."/>
            <person name="Ye C."/>
            <person name="Zhang J."/>
            <person name="Xu J."/>
            <person name="Zhou Y."/>
            <person name="Yu Y."/>
            <person name="Zhang B."/>
            <person name="Zhuang S."/>
            <person name="Wei H."/>
            <person name="Liu B."/>
            <person name="Lei M."/>
            <person name="Yu H."/>
            <person name="Li Y."/>
            <person name="Xu H."/>
            <person name="Wei S."/>
            <person name="He X."/>
            <person name="Fang L."/>
            <person name="Zhang Z."/>
            <person name="Zhang Y."/>
            <person name="Huang X."/>
            <person name="Su Z."/>
            <person name="Tong W."/>
            <person name="Li J."/>
            <person name="Tong Z."/>
            <person name="Li S."/>
            <person name="Ye J."/>
            <person name="Wang L."/>
            <person name="Fang L."/>
            <person name="Lei T."/>
            <person name="Chen C.-S."/>
            <person name="Chen H.-C."/>
            <person name="Xu Z."/>
            <person name="Li H."/>
            <person name="Huang H."/>
            <person name="Zhang F."/>
            <person name="Xu H."/>
            <person name="Li N."/>
            <person name="Zhao C."/>
            <person name="Li S."/>
            <person name="Dong L."/>
            <person name="Huang Y."/>
            <person name="Li L."/>
            <person name="Xi Y."/>
            <person name="Qi Q."/>
            <person name="Li W."/>
            <person name="Zhang B."/>
            <person name="Hu W."/>
            <person name="Zhang Y."/>
            <person name="Tian X."/>
            <person name="Jiao Y."/>
            <person name="Liang X."/>
            <person name="Jin J."/>
            <person name="Gao L."/>
            <person name="Zheng W."/>
            <person name="Hao B."/>
            <person name="Liu S.-M."/>
            <person name="Wang W."/>
            <person name="Yuan L."/>
            <person name="Cao M."/>
            <person name="McDermott J."/>
            <person name="Samudrala R."/>
            <person name="Wang J."/>
            <person name="Wong G.K.-S."/>
            <person name="Yang H."/>
        </authorList>
    </citation>
    <scope>NUCLEOTIDE SEQUENCE [LARGE SCALE GENOMIC DNA]</scope>
    <source>
        <strain>cv. Nipponbare</strain>
    </source>
</reference>
<reference key="7">
    <citation type="journal article" date="2003" name="Science">
        <title>Collection, mapping, and annotation of over 28,000 cDNA clones from japonica rice.</title>
        <authorList>
            <consortium name="The rice full-length cDNA consortium"/>
        </authorList>
    </citation>
    <scope>NUCLEOTIDE SEQUENCE [LARGE SCALE MRNA]</scope>
    <source>
        <strain>cv. Nipponbare</strain>
    </source>
</reference>
<reference key="8">
    <citation type="journal article" date="1998" name="Plant Mol. Biol.">
        <title>A new class II rice chitinase, Rcht2, whose induction by fungal elicitor is abolished by protein phosphatase 1 and 2A inhibitor.</title>
        <authorList>
            <person name="Kim C.Y."/>
            <person name="Gal S.W."/>
            <person name="Choe M.S."/>
            <person name="Jeong S.Y."/>
            <person name="Lee S.I."/>
            <person name="Cheong Y.H."/>
            <person name="Lee S.H."/>
            <person name="Choi Y.J."/>
            <person name="Han C.-D."/>
            <person name="Kang K.Y."/>
            <person name="Cho M.J."/>
        </authorList>
    </citation>
    <scope>INDUCTION</scope>
</reference>
<reference key="9">
    <citation type="journal article" date="2006" name="Genome">
        <title>Distribution, structure, organ-specific expression, and phylogenic analysis of the pathogenesis-related protein-3 chitinase gene family in rice (Oryza sativa L.).</title>
        <authorList>
            <person name="Nakazaki T."/>
            <person name="Tsukiyama T."/>
            <person name="Okumoto Y."/>
            <person name="Kageyama D."/>
            <person name="Naito K."/>
            <person name="Inouye K."/>
            <person name="Tanisaka T."/>
        </authorList>
    </citation>
    <scope>GENE FAMILY</scope>
    <scope>NOMENCLATURE</scope>
    <scope>TISSUE SPECIFICITY</scope>
</reference>
<keyword id="KW-0119">Carbohydrate metabolism</keyword>
<keyword id="KW-1015">Disulfide bond</keyword>
<keyword id="KW-0326">Glycosidase</keyword>
<keyword id="KW-0378">Hydrolase</keyword>
<keyword id="KW-0624">Polysaccharide degradation</keyword>
<keyword id="KW-1185">Reference proteome</keyword>
<keyword id="KW-0732">Signal</keyword>
<evidence type="ECO:0000250" key="1"/>
<evidence type="ECO:0000250" key="2">
    <source>
        <dbReference type="UniProtKB" id="P29022"/>
    </source>
</evidence>
<evidence type="ECO:0000255" key="3"/>
<evidence type="ECO:0000269" key="4">
    <source>
    </source>
</evidence>
<evidence type="ECO:0000269" key="5">
    <source>
    </source>
</evidence>
<evidence type="ECO:0000305" key="6"/>
<name>CHI8_ORYSJ</name>
<comment type="catalytic activity">
    <reaction>
        <text>Random endo-hydrolysis of N-acetyl-beta-D-glucosaminide (1-&gt;4)-beta-linkages in chitin and chitodextrins.</text>
        <dbReference type="EC" id="3.2.1.14"/>
    </reaction>
</comment>
<comment type="tissue specificity">
    <text evidence="4">Expressed in roots, leaves, sheaths and meristems.</text>
</comment>
<comment type="induction">
    <text evidence="5">By glycol chitin and fungal elicitor in suspension cell culture and ethephon in leaves.</text>
</comment>
<comment type="similarity">
    <text evidence="6">Belongs to the glycosyl hydrolase 19 family. Chitinase class II subfamily.</text>
</comment>
<comment type="caution">
    <text evidence="6">Lacks the chitin binding type-1 domain which is one of the conserved features of the chitinase class I and class IV subfamilies.</text>
</comment>
<dbReference type="EC" id="3.2.1.14"/>
<dbReference type="EMBL" id="AB016497">
    <property type="protein sequence ID" value="BAA31997.1"/>
    <property type="molecule type" value="mRNA"/>
</dbReference>
<dbReference type="EMBL" id="AC051633">
    <property type="protein sequence ID" value="AAG13608.1"/>
    <property type="molecule type" value="Genomic_DNA"/>
</dbReference>
<dbReference type="EMBL" id="DP000086">
    <property type="protein sequence ID" value="AAP54865.1"/>
    <property type="molecule type" value="Genomic_DNA"/>
</dbReference>
<dbReference type="EMBL" id="AP008216">
    <property type="protein sequence ID" value="BAF27110.1"/>
    <property type="molecule type" value="Genomic_DNA"/>
</dbReference>
<dbReference type="EMBL" id="AP014966">
    <property type="protein sequence ID" value="BAT11881.1"/>
    <property type="molecule type" value="Genomic_DNA"/>
</dbReference>
<dbReference type="EMBL" id="CM000147">
    <property type="protein sequence ID" value="EAZ16856.1"/>
    <property type="molecule type" value="Genomic_DNA"/>
</dbReference>
<dbReference type="EMBL" id="AK070067">
    <property type="protein sequence ID" value="BAG91751.1"/>
    <property type="molecule type" value="mRNA"/>
</dbReference>
<dbReference type="RefSeq" id="XP_015614506.1">
    <property type="nucleotide sequence ID" value="XM_015759020.1"/>
</dbReference>
<dbReference type="SMR" id="Q7XCK6"/>
<dbReference type="FunCoup" id="Q7XCK6">
    <property type="interactions" value="253"/>
</dbReference>
<dbReference type="STRING" id="39947.Q7XCK6"/>
<dbReference type="CAZy" id="GH19">
    <property type="family name" value="Glycoside Hydrolase Family 19"/>
</dbReference>
<dbReference type="PaxDb" id="39947-Q7XCK6"/>
<dbReference type="EnsemblPlants" id="Os10t0542900-01">
    <property type="protein sequence ID" value="Os10t0542900-01"/>
    <property type="gene ID" value="Os10g0542900"/>
</dbReference>
<dbReference type="Gramene" id="Os10t0542900-01">
    <property type="protein sequence ID" value="Os10t0542900-01"/>
    <property type="gene ID" value="Os10g0542900"/>
</dbReference>
<dbReference type="KEGG" id="dosa:Os10g0542900"/>
<dbReference type="eggNOG" id="KOG4742">
    <property type="taxonomic scope" value="Eukaryota"/>
</dbReference>
<dbReference type="HOGENOM" id="CLU_045506_1_0_1"/>
<dbReference type="InParanoid" id="Q7XCK6"/>
<dbReference type="OMA" id="HQSNYER"/>
<dbReference type="OrthoDB" id="5985073at2759"/>
<dbReference type="Proteomes" id="UP000000763">
    <property type="component" value="Chromosome 10"/>
</dbReference>
<dbReference type="Proteomes" id="UP000007752">
    <property type="component" value="Chromosome 10"/>
</dbReference>
<dbReference type="Proteomes" id="UP000059680">
    <property type="component" value="Chromosome 10"/>
</dbReference>
<dbReference type="GO" id="GO:0004568">
    <property type="term" value="F:chitinase activity"/>
    <property type="evidence" value="ECO:0000318"/>
    <property type="project" value="GO_Central"/>
</dbReference>
<dbReference type="GO" id="GO:0008843">
    <property type="term" value="F:endochitinase activity"/>
    <property type="evidence" value="ECO:0007669"/>
    <property type="project" value="UniProtKB-EC"/>
</dbReference>
<dbReference type="GO" id="GO:0016998">
    <property type="term" value="P:cell wall macromolecule catabolic process"/>
    <property type="evidence" value="ECO:0007669"/>
    <property type="project" value="InterPro"/>
</dbReference>
<dbReference type="GO" id="GO:0006032">
    <property type="term" value="P:chitin catabolic process"/>
    <property type="evidence" value="ECO:0007669"/>
    <property type="project" value="InterPro"/>
</dbReference>
<dbReference type="GO" id="GO:0050832">
    <property type="term" value="P:defense response to fungus"/>
    <property type="evidence" value="ECO:0000318"/>
    <property type="project" value="GO_Central"/>
</dbReference>
<dbReference type="GO" id="GO:0000272">
    <property type="term" value="P:polysaccharide catabolic process"/>
    <property type="evidence" value="ECO:0007669"/>
    <property type="project" value="UniProtKB-KW"/>
</dbReference>
<dbReference type="CDD" id="cd00325">
    <property type="entry name" value="chitinase_GH19"/>
    <property type="match status" value="1"/>
</dbReference>
<dbReference type="FunFam" id="3.30.20.10:FF:000002">
    <property type="entry name" value="Acidic endochitinase pcht28"/>
    <property type="match status" value="1"/>
</dbReference>
<dbReference type="Gene3D" id="1.10.530.10">
    <property type="match status" value="1"/>
</dbReference>
<dbReference type="Gene3D" id="3.30.20.10">
    <property type="entry name" value="Endochitinase, domain 2"/>
    <property type="match status" value="1"/>
</dbReference>
<dbReference type="InterPro" id="IPR016283">
    <property type="entry name" value="Glyco_hydro_19"/>
</dbReference>
<dbReference type="InterPro" id="IPR000726">
    <property type="entry name" value="Glyco_hydro_19_cat"/>
</dbReference>
<dbReference type="InterPro" id="IPR023346">
    <property type="entry name" value="Lysozyme-like_dom_sf"/>
</dbReference>
<dbReference type="PANTHER" id="PTHR22595:SF171">
    <property type="entry name" value="BASIC ENDOCHITINASE B"/>
    <property type="match status" value="1"/>
</dbReference>
<dbReference type="PANTHER" id="PTHR22595">
    <property type="entry name" value="CHITINASE-RELATED"/>
    <property type="match status" value="1"/>
</dbReference>
<dbReference type="Pfam" id="PF00182">
    <property type="entry name" value="Glyco_hydro_19"/>
    <property type="match status" value="1"/>
</dbReference>
<dbReference type="PIRSF" id="PIRSF001060">
    <property type="entry name" value="Endochitinase"/>
    <property type="match status" value="1"/>
</dbReference>
<dbReference type="SUPFAM" id="SSF53955">
    <property type="entry name" value="Lysozyme-like"/>
    <property type="match status" value="1"/>
</dbReference>
<dbReference type="PROSITE" id="PS00773">
    <property type="entry name" value="CHITINASE_19_1"/>
    <property type="match status" value="1"/>
</dbReference>
<dbReference type="PROSITE" id="PS00774">
    <property type="entry name" value="CHITINASE_19_2"/>
    <property type="match status" value="1"/>
</dbReference>
<sequence>MTTTTTRFVQLAACAAASLLAVAASGAAAQGVGSVITQAVFNSMLPNRDNSQCPARGFYTYDAFIAAANSFPAFGTSGGSAELIRRELAAFFGQTSHETTGGTRGSSDQFQWGYCFKEEINKATSPPYYGRGPIQLTGQSNYQAAGNALGLDLVGNPDLVSTDAVVSFKTAIWFWMTAQGNKPSCHDVILGRWTPSAADTAAGRVPGYGVITNIINGGIECGVGQNDANVDRIGYYKRYCDMLGAGYGSNLDCYNQRNFAS</sequence>
<organism>
    <name type="scientific">Oryza sativa subsp. japonica</name>
    <name type="common">Rice</name>
    <dbReference type="NCBI Taxonomy" id="39947"/>
    <lineage>
        <taxon>Eukaryota</taxon>
        <taxon>Viridiplantae</taxon>
        <taxon>Streptophyta</taxon>
        <taxon>Embryophyta</taxon>
        <taxon>Tracheophyta</taxon>
        <taxon>Spermatophyta</taxon>
        <taxon>Magnoliopsida</taxon>
        <taxon>Liliopsida</taxon>
        <taxon>Poales</taxon>
        <taxon>Poaceae</taxon>
        <taxon>BOP clade</taxon>
        <taxon>Oryzoideae</taxon>
        <taxon>Oryzeae</taxon>
        <taxon>Oryzinae</taxon>
        <taxon>Oryza</taxon>
        <taxon>Oryza sativa</taxon>
    </lineage>
</organism>
<protein>
    <recommendedName>
        <fullName>Chitinase 8</fullName>
        <ecNumber>3.2.1.14</ecNumber>
    </recommendedName>
    <alternativeName>
        <fullName>Class II chitinase a</fullName>
        <shortName>OsChia2a</shortName>
    </alternativeName>
    <alternativeName>
        <fullName>Pathogenesis related (PR)-3 chitinase 8</fullName>
    </alternativeName>
</protein>
<proteinExistence type="evidence at transcript level"/>
<feature type="signal peptide" evidence="3">
    <location>
        <begin position="1"/>
        <end position="29"/>
    </location>
</feature>
<feature type="chain" id="PRO_0000383468" description="Chitinase 8">
    <location>
        <begin position="30"/>
        <end position="261"/>
    </location>
</feature>
<feature type="active site" description="Proton donor" evidence="2">
    <location>
        <position position="98"/>
    </location>
</feature>
<feature type="disulfide bond" evidence="1">
    <location>
        <begin position="53"/>
        <end position="115"/>
    </location>
</feature>
<feature type="disulfide bond" evidence="1">
    <location>
        <begin position="221"/>
        <end position="253"/>
    </location>
</feature>
<feature type="sequence conflict" description="In Ref. 1; BAA31997." evidence="6" ref="1">
    <original>DT</original>
    <variation>EH</variation>
    <location>
        <begin position="199"/>
        <end position="200"/>
    </location>
</feature>
<accession>Q7XCK6</accession>
<accession>A0A0P0XX79</accession>
<accession>O80423</accession>
<accession>Q9FWE9</accession>